<keyword id="KW-0004">4Fe-4S</keyword>
<keyword id="KW-0963">Cytoplasm</keyword>
<keyword id="KW-0408">Iron</keyword>
<keyword id="KW-0411">Iron-sulfur</keyword>
<keyword id="KW-0479">Metal-binding</keyword>
<keyword id="KW-1185">Reference proteome</keyword>
<keyword id="KW-0949">S-adenosyl-L-methionine</keyword>
<keyword id="KW-0808">Transferase</keyword>
<keyword id="KW-0819">tRNA processing</keyword>
<proteinExistence type="inferred from homology"/>
<reference key="1">
    <citation type="journal article" date="2003" name="Nat. Genet.">
        <title>Comparative analysis of the genome sequences of Bordetella pertussis, Bordetella parapertussis and Bordetella bronchiseptica.</title>
        <authorList>
            <person name="Parkhill J."/>
            <person name="Sebaihia M."/>
            <person name="Preston A."/>
            <person name="Murphy L.D."/>
            <person name="Thomson N.R."/>
            <person name="Harris D.E."/>
            <person name="Holden M.T.G."/>
            <person name="Churcher C.M."/>
            <person name="Bentley S.D."/>
            <person name="Mungall K.L."/>
            <person name="Cerdeno-Tarraga A.-M."/>
            <person name="Temple L."/>
            <person name="James K.D."/>
            <person name="Harris B."/>
            <person name="Quail M.A."/>
            <person name="Achtman M."/>
            <person name="Atkin R."/>
            <person name="Baker S."/>
            <person name="Basham D."/>
            <person name="Bason N."/>
            <person name="Cherevach I."/>
            <person name="Chillingworth T."/>
            <person name="Collins M."/>
            <person name="Cronin A."/>
            <person name="Davis P."/>
            <person name="Doggett J."/>
            <person name="Feltwell T."/>
            <person name="Goble A."/>
            <person name="Hamlin N."/>
            <person name="Hauser H."/>
            <person name="Holroyd S."/>
            <person name="Jagels K."/>
            <person name="Leather S."/>
            <person name="Moule S."/>
            <person name="Norberczak H."/>
            <person name="O'Neil S."/>
            <person name="Ormond D."/>
            <person name="Price C."/>
            <person name="Rabbinowitsch E."/>
            <person name="Rutter S."/>
            <person name="Sanders M."/>
            <person name="Saunders D."/>
            <person name="Seeger K."/>
            <person name="Sharp S."/>
            <person name="Simmonds M."/>
            <person name="Skelton J."/>
            <person name="Squares R."/>
            <person name="Squares S."/>
            <person name="Stevens K."/>
            <person name="Unwin L."/>
            <person name="Whitehead S."/>
            <person name="Barrell B.G."/>
            <person name="Maskell D.J."/>
        </authorList>
    </citation>
    <scope>NUCLEOTIDE SEQUENCE [LARGE SCALE GENOMIC DNA]</scope>
    <source>
        <strain>Tohama I / ATCC BAA-589 / NCTC 13251</strain>
    </source>
</reference>
<name>MIAB_BORPE</name>
<feature type="chain" id="PRO_0000374158" description="tRNA-2-methylthio-N(6)-dimethylallyladenosine synthase">
    <location>
        <begin position="1"/>
        <end position="447"/>
    </location>
</feature>
<feature type="domain" description="MTTase N-terminal" evidence="1">
    <location>
        <begin position="1"/>
        <end position="116"/>
    </location>
</feature>
<feature type="domain" description="Radical SAM core" evidence="2">
    <location>
        <begin position="139"/>
        <end position="372"/>
    </location>
</feature>
<feature type="domain" description="TRAM" evidence="1">
    <location>
        <begin position="375"/>
        <end position="438"/>
    </location>
</feature>
<feature type="binding site" evidence="1">
    <location>
        <position position="8"/>
    </location>
    <ligand>
        <name>[4Fe-4S] cluster</name>
        <dbReference type="ChEBI" id="CHEBI:49883"/>
        <label>1</label>
    </ligand>
</feature>
<feature type="binding site" evidence="1">
    <location>
        <position position="45"/>
    </location>
    <ligand>
        <name>[4Fe-4S] cluster</name>
        <dbReference type="ChEBI" id="CHEBI:49883"/>
        <label>1</label>
    </ligand>
</feature>
<feature type="binding site" evidence="1">
    <location>
        <position position="79"/>
    </location>
    <ligand>
        <name>[4Fe-4S] cluster</name>
        <dbReference type="ChEBI" id="CHEBI:49883"/>
        <label>1</label>
    </ligand>
</feature>
<feature type="binding site" evidence="1">
    <location>
        <position position="153"/>
    </location>
    <ligand>
        <name>[4Fe-4S] cluster</name>
        <dbReference type="ChEBI" id="CHEBI:49883"/>
        <label>2</label>
        <note>4Fe-4S-S-AdoMet</note>
    </ligand>
</feature>
<feature type="binding site" evidence="1">
    <location>
        <position position="157"/>
    </location>
    <ligand>
        <name>[4Fe-4S] cluster</name>
        <dbReference type="ChEBI" id="CHEBI:49883"/>
        <label>2</label>
        <note>4Fe-4S-S-AdoMet</note>
    </ligand>
</feature>
<feature type="binding site" evidence="1">
    <location>
        <position position="160"/>
    </location>
    <ligand>
        <name>[4Fe-4S] cluster</name>
        <dbReference type="ChEBI" id="CHEBI:49883"/>
        <label>2</label>
        <note>4Fe-4S-S-AdoMet</note>
    </ligand>
</feature>
<sequence>MYIRTFGCQMNEYDSDKMADVLRADQGLELTDNPEDADVILFNTCSVREKAQEKVFSDLGRVQHLKKQNPNLVIGVGGCVASQEGEAIVKRAPYVDVVFGPQTLHRLPDLIKRRRAQGVSQVDISFPEIEKFDALPPPRVDGATAFVSIMEGCSKYCSFCVVPYTRGEEVSRPFDDVLLEVADLADQGVKEVTLLGQNVNAYRGAMGDSGEIADFAMLLEYVHEIPGIERIRYTTSHPKEMTQRMVDAYARLPKLVSFLHLPVQAGSDRVLAAMKRGYTALEFKSVVRRLRAARPSLTLSSDFIVGFPGETEEDFQKTMKLIEDVGFDTSFSFVYSRRPGTPAADLHDDTPQDVKLRRLQQLQALINQQAAAIAQGMIGTRQRVLVEGPSRRDPNELMGRTENNRIVNFPGVPRLIGHMVDVVVTHAHTNSLRGRVAGIERDTSGAE</sequence>
<dbReference type="EC" id="2.8.4.3" evidence="1"/>
<dbReference type="EMBL" id="BX640414">
    <property type="protein sequence ID" value="CAE41341.1"/>
    <property type="molecule type" value="Genomic_DNA"/>
</dbReference>
<dbReference type="RefSeq" id="NP_879828.1">
    <property type="nucleotide sequence ID" value="NC_002929.2"/>
</dbReference>
<dbReference type="SMR" id="Q7VZ86"/>
<dbReference type="STRING" id="257313.BP1041"/>
<dbReference type="PaxDb" id="257313-BP1041"/>
<dbReference type="DNASU" id="2664503"/>
<dbReference type="KEGG" id="bpe:BP1041"/>
<dbReference type="PATRIC" id="fig|257313.5.peg.1112"/>
<dbReference type="eggNOG" id="COG0621">
    <property type="taxonomic scope" value="Bacteria"/>
</dbReference>
<dbReference type="HOGENOM" id="CLU_018697_2_0_4"/>
<dbReference type="Proteomes" id="UP000002676">
    <property type="component" value="Chromosome"/>
</dbReference>
<dbReference type="GO" id="GO:0005829">
    <property type="term" value="C:cytosol"/>
    <property type="evidence" value="ECO:0007669"/>
    <property type="project" value="TreeGrafter"/>
</dbReference>
<dbReference type="GO" id="GO:0051539">
    <property type="term" value="F:4 iron, 4 sulfur cluster binding"/>
    <property type="evidence" value="ECO:0007669"/>
    <property type="project" value="UniProtKB-UniRule"/>
</dbReference>
<dbReference type="GO" id="GO:0046872">
    <property type="term" value="F:metal ion binding"/>
    <property type="evidence" value="ECO:0007669"/>
    <property type="project" value="UniProtKB-KW"/>
</dbReference>
<dbReference type="GO" id="GO:0035597">
    <property type="term" value="F:N6-isopentenyladenosine methylthiotransferase activity"/>
    <property type="evidence" value="ECO:0007669"/>
    <property type="project" value="TreeGrafter"/>
</dbReference>
<dbReference type="CDD" id="cd01335">
    <property type="entry name" value="Radical_SAM"/>
    <property type="match status" value="1"/>
</dbReference>
<dbReference type="FunFam" id="3.40.50.12160:FF:000001">
    <property type="entry name" value="tRNA-2-methylthio-N(6)-dimethylallyladenosine synthase"/>
    <property type="match status" value="1"/>
</dbReference>
<dbReference type="FunFam" id="3.80.30.20:FF:000001">
    <property type="entry name" value="tRNA-2-methylthio-N(6)-dimethylallyladenosine synthase 2"/>
    <property type="match status" value="1"/>
</dbReference>
<dbReference type="Gene3D" id="3.40.50.12160">
    <property type="entry name" value="Methylthiotransferase, N-terminal domain"/>
    <property type="match status" value="1"/>
</dbReference>
<dbReference type="Gene3D" id="3.80.30.20">
    <property type="entry name" value="tm_1862 like domain"/>
    <property type="match status" value="1"/>
</dbReference>
<dbReference type="HAMAP" id="MF_01864">
    <property type="entry name" value="tRNA_metthiotr_MiaB"/>
    <property type="match status" value="1"/>
</dbReference>
<dbReference type="InterPro" id="IPR006638">
    <property type="entry name" value="Elp3/MiaA/NifB-like_rSAM"/>
</dbReference>
<dbReference type="InterPro" id="IPR005839">
    <property type="entry name" value="Methylthiotransferase"/>
</dbReference>
<dbReference type="InterPro" id="IPR020612">
    <property type="entry name" value="Methylthiotransferase_CS"/>
</dbReference>
<dbReference type="InterPro" id="IPR013848">
    <property type="entry name" value="Methylthiotransferase_N"/>
</dbReference>
<dbReference type="InterPro" id="IPR038135">
    <property type="entry name" value="Methylthiotransferase_N_sf"/>
</dbReference>
<dbReference type="InterPro" id="IPR006463">
    <property type="entry name" value="MiaB_methiolase"/>
</dbReference>
<dbReference type="InterPro" id="IPR007197">
    <property type="entry name" value="rSAM"/>
</dbReference>
<dbReference type="InterPro" id="IPR023404">
    <property type="entry name" value="rSAM_horseshoe"/>
</dbReference>
<dbReference type="InterPro" id="IPR002792">
    <property type="entry name" value="TRAM_dom"/>
</dbReference>
<dbReference type="NCBIfam" id="TIGR01574">
    <property type="entry name" value="miaB-methiolase"/>
    <property type="match status" value="1"/>
</dbReference>
<dbReference type="NCBIfam" id="TIGR00089">
    <property type="entry name" value="MiaB/RimO family radical SAM methylthiotransferase"/>
    <property type="match status" value="1"/>
</dbReference>
<dbReference type="PANTHER" id="PTHR43020">
    <property type="entry name" value="CDK5 REGULATORY SUBUNIT-ASSOCIATED PROTEIN 1"/>
    <property type="match status" value="1"/>
</dbReference>
<dbReference type="PANTHER" id="PTHR43020:SF2">
    <property type="entry name" value="MITOCHONDRIAL TRNA METHYLTHIOTRANSFERASE CDK5RAP1"/>
    <property type="match status" value="1"/>
</dbReference>
<dbReference type="Pfam" id="PF04055">
    <property type="entry name" value="Radical_SAM"/>
    <property type="match status" value="1"/>
</dbReference>
<dbReference type="Pfam" id="PF01938">
    <property type="entry name" value="TRAM"/>
    <property type="match status" value="1"/>
</dbReference>
<dbReference type="Pfam" id="PF00919">
    <property type="entry name" value="UPF0004"/>
    <property type="match status" value="1"/>
</dbReference>
<dbReference type="SFLD" id="SFLDF00273">
    <property type="entry name" value="(dimethylallyl)adenosine_tRNA"/>
    <property type="match status" value="1"/>
</dbReference>
<dbReference type="SFLD" id="SFLDG01082">
    <property type="entry name" value="B12-binding_domain_containing"/>
    <property type="match status" value="1"/>
</dbReference>
<dbReference type="SFLD" id="SFLDS00029">
    <property type="entry name" value="Radical_SAM"/>
    <property type="match status" value="1"/>
</dbReference>
<dbReference type="SMART" id="SM00729">
    <property type="entry name" value="Elp3"/>
    <property type="match status" value="1"/>
</dbReference>
<dbReference type="SUPFAM" id="SSF102114">
    <property type="entry name" value="Radical SAM enzymes"/>
    <property type="match status" value="1"/>
</dbReference>
<dbReference type="PROSITE" id="PS51449">
    <property type="entry name" value="MTTASE_N"/>
    <property type="match status" value="1"/>
</dbReference>
<dbReference type="PROSITE" id="PS01278">
    <property type="entry name" value="MTTASE_RADICAL"/>
    <property type="match status" value="1"/>
</dbReference>
<dbReference type="PROSITE" id="PS51918">
    <property type="entry name" value="RADICAL_SAM"/>
    <property type="match status" value="1"/>
</dbReference>
<dbReference type="PROSITE" id="PS50926">
    <property type="entry name" value="TRAM"/>
    <property type="match status" value="1"/>
</dbReference>
<accession>Q7VZ86</accession>
<comment type="function">
    <text evidence="1">Catalyzes the methylthiolation of N6-(dimethylallyl)adenosine (i(6)A), leading to the formation of 2-methylthio-N6-(dimethylallyl)adenosine (ms(2)i(6)A) at position 37 in tRNAs that read codons beginning with uridine.</text>
</comment>
<comment type="catalytic activity">
    <reaction evidence="1">
        <text>N(6)-dimethylallyladenosine(37) in tRNA + (sulfur carrier)-SH + AH2 + 2 S-adenosyl-L-methionine = 2-methylsulfanyl-N(6)-dimethylallyladenosine(37) in tRNA + (sulfur carrier)-H + 5'-deoxyadenosine + L-methionine + A + S-adenosyl-L-homocysteine + 2 H(+)</text>
        <dbReference type="Rhea" id="RHEA:37067"/>
        <dbReference type="Rhea" id="RHEA-COMP:10375"/>
        <dbReference type="Rhea" id="RHEA-COMP:10376"/>
        <dbReference type="Rhea" id="RHEA-COMP:14737"/>
        <dbReference type="Rhea" id="RHEA-COMP:14739"/>
        <dbReference type="ChEBI" id="CHEBI:13193"/>
        <dbReference type="ChEBI" id="CHEBI:15378"/>
        <dbReference type="ChEBI" id="CHEBI:17319"/>
        <dbReference type="ChEBI" id="CHEBI:17499"/>
        <dbReference type="ChEBI" id="CHEBI:29917"/>
        <dbReference type="ChEBI" id="CHEBI:57844"/>
        <dbReference type="ChEBI" id="CHEBI:57856"/>
        <dbReference type="ChEBI" id="CHEBI:59789"/>
        <dbReference type="ChEBI" id="CHEBI:64428"/>
        <dbReference type="ChEBI" id="CHEBI:74415"/>
        <dbReference type="ChEBI" id="CHEBI:74417"/>
        <dbReference type="EC" id="2.8.4.3"/>
    </reaction>
</comment>
<comment type="cofactor">
    <cofactor evidence="1">
        <name>[4Fe-4S] cluster</name>
        <dbReference type="ChEBI" id="CHEBI:49883"/>
    </cofactor>
    <text evidence="1">Binds 2 [4Fe-4S] clusters. One cluster is coordinated with 3 cysteines and an exchangeable S-adenosyl-L-methionine.</text>
</comment>
<comment type="subunit">
    <text evidence="1">Monomer.</text>
</comment>
<comment type="subcellular location">
    <subcellularLocation>
        <location evidence="1">Cytoplasm</location>
    </subcellularLocation>
</comment>
<comment type="similarity">
    <text evidence="1">Belongs to the methylthiotransferase family. MiaB subfamily.</text>
</comment>
<protein>
    <recommendedName>
        <fullName evidence="1">tRNA-2-methylthio-N(6)-dimethylallyladenosine synthase</fullName>
        <ecNumber evidence="1">2.8.4.3</ecNumber>
    </recommendedName>
    <alternativeName>
        <fullName evidence="1">(Dimethylallyl)adenosine tRNA methylthiotransferase MiaB</fullName>
    </alternativeName>
    <alternativeName>
        <fullName evidence="1">tRNA-i(6)A37 methylthiotransferase</fullName>
    </alternativeName>
</protein>
<evidence type="ECO:0000255" key="1">
    <source>
        <dbReference type="HAMAP-Rule" id="MF_01864"/>
    </source>
</evidence>
<evidence type="ECO:0000255" key="2">
    <source>
        <dbReference type="PROSITE-ProRule" id="PRU01266"/>
    </source>
</evidence>
<organism>
    <name type="scientific">Bordetella pertussis (strain Tohama I / ATCC BAA-589 / NCTC 13251)</name>
    <dbReference type="NCBI Taxonomy" id="257313"/>
    <lineage>
        <taxon>Bacteria</taxon>
        <taxon>Pseudomonadati</taxon>
        <taxon>Pseudomonadota</taxon>
        <taxon>Betaproteobacteria</taxon>
        <taxon>Burkholderiales</taxon>
        <taxon>Alcaligenaceae</taxon>
        <taxon>Bordetella</taxon>
    </lineage>
</organism>
<gene>
    <name evidence="1" type="primary">miaB</name>
    <name type="ordered locus">BP1041</name>
</gene>